<accession>Q608S6</accession>
<feature type="chain" id="PRO_0000131933" description="Cytidylate kinase">
    <location>
        <begin position="1"/>
        <end position="222"/>
    </location>
</feature>
<feature type="binding site" evidence="1">
    <location>
        <begin position="12"/>
        <end position="20"/>
    </location>
    <ligand>
        <name>ATP</name>
        <dbReference type="ChEBI" id="CHEBI:30616"/>
    </ligand>
</feature>
<sequence>MQDTIPVLTIDGPSGAGKGTAARAVAARLGWNFLDSGAIYRALAVAAVDRGVSREDESALAALAASLDLVFGADSTARILLWDADISGRIVTEECGNLASKLAAFPAVRQALLDKQRGFRRPPGLVADGRDMGTVVFPDAPYKVFLTASAEVRARRRYNQLKEKGMDVSLAHLTEEIEERDRRDRERQIAPLRAAADAVVIDSSDLSVDEVIQVCLSVVQSH</sequence>
<comment type="catalytic activity">
    <reaction evidence="1">
        <text>CMP + ATP = CDP + ADP</text>
        <dbReference type="Rhea" id="RHEA:11600"/>
        <dbReference type="ChEBI" id="CHEBI:30616"/>
        <dbReference type="ChEBI" id="CHEBI:58069"/>
        <dbReference type="ChEBI" id="CHEBI:60377"/>
        <dbReference type="ChEBI" id="CHEBI:456216"/>
        <dbReference type="EC" id="2.7.4.25"/>
    </reaction>
</comment>
<comment type="catalytic activity">
    <reaction evidence="1">
        <text>dCMP + ATP = dCDP + ADP</text>
        <dbReference type="Rhea" id="RHEA:25094"/>
        <dbReference type="ChEBI" id="CHEBI:30616"/>
        <dbReference type="ChEBI" id="CHEBI:57566"/>
        <dbReference type="ChEBI" id="CHEBI:58593"/>
        <dbReference type="ChEBI" id="CHEBI:456216"/>
        <dbReference type="EC" id="2.7.4.25"/>
    </reaction>
</comment>
<comment type="subcellular location">
    <subcellularLocation>
        <location evidence="1">Cytoplasm</location>
    </subcellularLocation>
</comment>
<comment type="similarity">
    <text evidence="1">Belongs to the cytidylate kinase family. Type 1 subfamily.</text>
</comment>
<protein>
    <recommendedName>
        <fullName evidence="1">Cytidylate kinase</fullName>
        <shortName evidence="1">CK</shortName>
        <ecNumber evidence="1">2.7.4.25</ecNumber>
    </recommendedName>
    <alternativeName>
        <fullName evidence="1">Cytidine monophosphate kinase</fullName>
        <shortName evidence="1">CMP kinase</shortName>
    </alternativeName>
</protein>
<evidence type="ECO:0000255" key="1">
    <source>
        <dbReference type="HAMAP-Rule" id="MF_00238"/>
    </source>
</evidence>
<proteinExistence type="inferred from homology"/>
<dbReference type="EC" id="2.7.4.25" evidence="1"/>
<dbReference type="EMBL" id="AE017282">
    <property type="protein sequence ID" value="AAU92308.1"/>
    <property type="molecule type" value="Genomic_DNA"/>
</dbReference>
<dbReference type="RefSeq" id="WP_010960690.1">
    <property type="nucleotide sequence ID" value="NC_002977.6"/>
</dbReference>
<dbReference type="SMR" id="Q608S6"/>
<dbReference type="STRING" id="243233.MCA1414"/>
<dbReference type="GeneID" id="88223687"/>
<dbReference type="KEGG" id="mca:MCA1414"/>
<dbReference type="eggNOG" id="COG0283">
    <property type="taxonomic scope" value="Bacteria"/>
</dbReference>
<dbReference type="HOGENOM" id="CLU_079959_2_0_6"/>
<dbReference type="Proteomes" id="UP000006821">
    <property type="component" value="Chromosome"/>
</dbReference>
<dbReference type="GO" id="GO:0005829">
    <property type="term" value="C:cytosol"/>
    <property type="evidence" value="ECO:0007669"/>
    <property type="project" value="TreeGrafter"/>
</dbReference>
<dbReference type="GO" id="GO:0005524">
    <property type="term" value="F:ATP binding"/>
    <property type="evidence" value="ECO:0007669"/>
    <property type="project" value="UniProtKB-UniRule"/>
</dbReference>
<dbReference type="GO" id="GO:0036430">
    <property type="term" value="F:CMP kinase activity"/>
    <property type="evidence" value="ECO:0007669"/>
    <property type="project" value="RHEA"/>
</dbReference>
<dbReference type="GO" id="GO:0036431">
    <property type="term" value="F:dCMP kinase activity"/>
    <property type="evidence" value="ECO:0007669"/>
    <property type="project" value="RHEA"/>
</dbReference>
<dbReference type="GO" id="GO:0015949">
    <property type="term" value="P:nucleobase-containing small molecule interconversion"/>
    <property type="evidence" value="ECO:0007669"/>
    <property type="project" value="TreeGrafter"/>
</dbReference>
<dbReference type="GO" id="GO:0006220">
    <property type="term" value="P:pyrimidine nucleotide metabolic process"/>
    <property type="evidence" value="ECO:0007669"/>
    <property type="project" value="UniProtKB-UniRule"/>
</dbReference>
<dbReference type="CDD" id="cd02020">
    <property type="entry name" value="CMPK"/>
    <property type="match status" value="1"/>
</dbReference>
<dbReference type="Gene3D" id="3.40.50.300">
    <property type="entry name" value="P-loop containing nucleotide triphosphate hydrolases"/>
    <property type="match status" value="1"/>
</dbReference>
<dbReference type="HAMAP" id="MF_00238">
    <property type="entry name" value="Cytidyl_kinase_type1"/>
    <property type="match status" value="1"/>
</dbReference>
<dbReference type="InterPro" id="IPR003136">
    <property type="entry name" value="Cytidylate_kin"/>
</dbReference>
<dbReference type="InterPro" id="IPR011994">
    <property type="entry name" value="Cytidylate_kinase_dom"/>
</dbReference>
<dbReference type="InterPro" id="IPR027417">
    <property type="entry name" value="P-loop_NTPase"/>
</dbReference>
<dbReference type="NCBIfam" id="TIGR00017">
    <property type="entry name" value="cmk"/>
    <property type="match status" value="1"/>
</dbReference>
<dbReference type="PANTHER" id="PTHR21299:SF2">
    <property type="entry name" value="CYTIDYLATE KINASE"/>
    <property type="match status" value="1"/>
</dbReference>
<dbReference type="PANTHER" id="PTHR21299">
    <property type="entry name" value="CYTIDYLATE KINASE/PANTOATE-BETA-ALANINE LIGASE"/>
    <property type="match status" value="1"/>
</dbReference>
<dbReference type="Pfam" id="PF02224">
    <property type="entry name" value="Cytidylate_kin"/>
    <property type="match status" value="1"/>
</dbReference>
<dbReference type="SUPFAM" id="SSF52540">
    <property type="entry name" value="P-loop containing nucleoside triphosphate hydrolases"/>
    <property type="match status" value="1"/>
</dbReference>
<organism>
    <name type="scientific">Methylococcus capsulatus (strain ATCC 33009 / NCIMB 11132 / Bath)</name>
    <dbReference type="NCBI Taxonomy" id="243233"/>
    <lineage>
        <taxon>Bacteria</taxon>
        <taxon>Pseudomonadati</taxon>
        <taxon>Pseudomonadota</taxon>
        <taxon>Gammaproteobacteria</taxon>
        <taxon>Methylococcales</taxon>
        <taxon>Methylococcaceae</taxon>
        <taxon>Methylococcus</taxon>
    </lineage>
</organism>
<gene>
    <name evidence="1" type="primary">cmk</name>
    <name type="ordered locus">MCA1414</name>
</gene>
<keyword id="KW-0067">ATP-binding</keyword>
<keyword id="KW-0963">Cytoplasm</keyword>
<keyword id="KW-0418">Kinase</keyword>
<keyword id="KW-0547">Nucleotide-binding</keyword>
<keyword id="KW-1185">Reference proteome</keyword>
<keyword id="KW-0808">Transferase</keyword>
<name>KCY_METCA</name>
<reference key="1">
    <citation type="journal article" date="2004" name="PLoS Biol.">
        <title>Genomic insights into methanotrophy: the complete genome sequence of Methylococcus capsulatus (Bath).</title>
        <authorList>
            <person name="Ward N.L."/>
            <person name="Larsen O."/>
            <person name="Sakwa J."/>
            <person name="Bruseth L."/>
            <person name="Khouri H.M."/>
            <person name="Durkin A.S."/>
            <person name="Dimitrov G."/>
            <person name="Jiang L."/>
            <person name="Scanlan D."/>
            <person name="Kang K.H."/>
            <person name="Lewis M.R."/>
            <person name="Nelson K.E."/>
            <person name="Methe B.A."/>
            <person name="Wu M."/>
            <person name="Heidelberg J.F."/>
            <person name="Paulsen I.T."/>
            <person name="Fouts D.E."/>
            <person name="Ravel J."/>
            <person name="Tettelin H."/>
            <person name="Ren Q."/>
            <person name="Read T.D."/>
            <person name="DeBoy R.T."/>
            <person name="Seshadri R."/>
            <person name="Salzberg S.L."/>
            <person name="Jensen H.B."/>
            <person name="Birkeland N.K."/>
            <person name="Nelson W.C."/>
            <person name="Dodson R.J."/>
            <person name="Grindhaug S.H."/>
            <person name="Holt I.E."/>
            <person name="Eidhammer I."/>
            <person name="Jonasen I."/>
            <person name="Vanaken S."/>
            <person name="Utterback T.R."/>
            <person name="Feldblyum T.V."/>
            <person name="Fraser C.M."/>
            <person name="Lillehaug J.R."/>
            <person name="Eisen J.A."/>
        </authorList>
    </citation>
    <scope>NUCLEOTIDE SEQUENCE [LARGE SCALE GENOMIC DNA]</scope>
    <source>
        <strain>ATCC 33009 / NCIMB 11132 / Bath</strain>
    </source>
</reference>